<comment type="function">
    <text evidence="1">Functions as a cell surface receptor for TIMP1 and plays a role in the activation of cellular signaling cascades. Plays a role in the activation of ITGB1 and integrin signaling, leading to the activation of AKT, FAK/PTK2 and MAP kinases. Promotes cell survival, reorganization of the actin cytoskeleton, cell adhesion, spreading and migration, via its role in the activation of AKT and FAK/PTK2. Plays a role in VEGFA signaling via its role in regulating the internalization of KDR/VEGFR2. Plays a role in intracellular vesicular transport processes, and is required for normal trafficking of the PMEL luminal domain that is essential for the development and maturation of melanocytes. Plays a role in the adhesion of leukocytes onto endothelial cells via its role in the regulation of SELP trafficking. May play a role in mast cell degranulation in response to Ms4a2/FceRI stimulation, but not in mast cell degranulation in response to other stimuli (By similarity).</text>
</comment>
<comment type="subunit">
    <text evidence="1 3">Interacts with TIMP1 and ITGB1 and recruits TIMP1 to ITGB1. Interacts with CD9. Identified in a complex with CD9 and ITGB3. Interacts with PMEL. Interacts with KDR/VEGFR2; identified in a complex with ITGB1 and KDR/VEGFR2 and is required to recruit KDR to ITGB1 complexes. Interacts with SYT7 (By similarity).</text>
</comment>
<comment type="subcellular location">
    <subcellularLocation>
        <location evidence="2">Cell membrane</location>
        <topology evidence="4">Multi-pass membrane protein</topology>
    </subcellularLocation>
    <subcellularLocation>
        <location evidence="2">Lysosome membrane</location>
        <topology evidence="4">Multi-pass membrane protein</topology>
    </subcellularLocation>
    <subcellularLocation>
        <location evidence="2">Late endosome membrane</location>
        <topology evidence="4">Multi-pass membrane protein</topology>
    </subcellularLocation>
    <subcellularLocation>
        <location evidence="2">Endosome</location>
        <location evidence="2">Multivesicular body</location>
    </subcellularLocation>
    <subcellularLocation>
        <location evidence="2">Melanosome</location>
    </subcellularLocation>
    <subcellularLocation>
        <location evidence="2">Secreted</location>
        <location evidence="2">Extracellular exosome</location>
    </subcellularLocation>
    <subcellularLocation>
        <location evidence="2">Cell surface</location>
    </subcellularLocation>
    <text evidence="2">Also found in Weibel-Palade bodies of endothelial cells. Located in platelet dense granules. Detected in a subset of pre-melanosomes. Detected on intralumenal vesicles (ILVs) within multivesicular bodies.</text>
</comment>
<comment type="PTM">
    <text evidence="1">Palmitoylated at a low, basal level in unstimulated platelets. The level of palmitoylation increases when platelets are activated by thrombin (in vitro) (By similarity).</text>
</comment>
<comment type="similarity">
    <text evidence="5">Belongs to the tetraspanin (TM4SF) family.</text>
</comment>
<name>CD63_BOVIN</name>
<reference key="1">
    <citation type="journal article" date="1999" name="Immunogenetics">
        <title>Molecular cloning of cattle CD63 and evidence for high level expression on subpopulations of dendritic cells.</title>
        <authorList>
            <person name="Brooke G.P."/>
            <person name="Sopp P."/>
            <person name="Kwong L.S."/>
            <person name="Howard C.J."/>
        </authorList>
    </citation>
    <scope>NUCLEOTIDE SEQUENCE [MRNA]</scope>
    <source>
        <tissue>Peripheral blood</tissue>
    </source>
</reference>
<reference key="2">
    <citation type="submission" date="2005-08" db="EMBL/GenBank/DDBJ databases">
        <authorList>
            <consortium name="NIH - Mammalian Gene Collection (MGC) project"/>
        </authorList>
    </citation>
    <scope>NUCLEOTIDE SEQUENCE [LARGE SCALE MRNA]</scope>
    <source>
        <strain>Crossbred X Angus</strain>
        <tissue>Liver</tissue>
    </source>
</reference>
<gene>
    <name type="primary">CD63</name>
</gene>
<protein>
    <recommendedName>
        <fullName>CD63 antigen</fullName>
    </recommendedName>
    <cdAntigenName>CD63</cdAntigenName>
</protein>
<proteinExistence type="evidence at transcript level"/>
<feature type="chain" id="PRO_0000219215" description="CD63 antigen">
    <location>
        <begin position="1"/>
        <end position="237"/>
    </location>
</feature>
<feature type="topological domain" description="Cytoplasmic" evidence="4">
    <location>
        <begin position="1"/>
        <end position="11"/>
    </location>
</feature>
<feature type="transmembrane region" description="Helical" evidence="4">
    <location>
        <begin position="12"/>
        <end position="32"/>
    </location>
</feature>
<feature type="topological domain" description="Extracellular" evidence="4">
    <location>
        <begin position="33"/>
        <end position="51"/>
    </location>
</feature>
<feature type="transmembrane region" description="Helical" evidence="4">
    <location>
        <begin position="52"/>
        <end position="72"/>
    </location>
</feature>
<feature type="topological domain" description="Cytoplasmic" evidence="4">
    <location>
        <begin position="73"/>
        <end position="81"/>
    </location>
</feature>
<feature type="transmembrane region" description="Helical" evidence="4">
    <location>
        <begin position="82"/>
        <end position="102"/>
    </location>
</feature>
<feature type="topological domain" description="Extracellular" evidence="4">
    <location>
        <begin position="103"/>
        <end position="202"/>
    </location>
</feature>
<feature type="transmembrane region" description="Helical" evidence="4">
    <location>
        <begin position="203"/>
        <end position="223"/>
    </location>
</feature>
<feature type="topological domain" description="Cytoplasmic" evidence="4">
    <location>
        <begin position="224"/>
        <end position="237"/>
    </location>
</feature>
<feature type="short sequence motif" description="Lysosomal targeting motif" evidence="3">
    <location>
        <begin position="233"/>
        <end position="237"/>
    </location>
</feature>
<feature type="glycosylation site" description="N-linked (GlcNAc...) asparagine" evidence="4">
    <location>
        <position position="40"/>
    </location>
</feature>
<feature type="glycosylation site" description="N-linked (GlcNAc...) asparagine" evidence="4">
    <location>
        <position position="130"/>
    </location>
</feature>
<feature type="glycosylation site" description="N-linked (GlcNAc...) asparagine" evidence="4">
    <location>
        <position position="150"/>
    </location>
</feature>
<feature type="glycosylation site" description="N-linked (GlcNAc...) asparagine" evidence="4">
    <location>
        <position position="171"/>
    </location>
</feature>
<feature type="sequence conflict" description="In Ref. 1; CAB40564." evidence="5" ref="1">
    <original>A</original>
    <variation>V</variation>
    <location>
        <position position="206"/>
    </location>
</feature>
<accession>Q9XSK2</accession>
<accession>Q3SZY2</accession>
<keyword id="KW-1003">Cell membrane</keyword>
<keyword id="KW-0967">Endosome</keyword>
<keyword id="KW-0325">Glycoprotein</keyword>
<keyword id="KW-0449">Lipoprotein</keyword>
<keyword id="KW-0458">Lysosome</keyword>
<keyword id="KW-0472">Membrane</keyword>
<keyword id="KW-0564">Palmitate</keyword>
<keyword id="KW-0653">Protein transport</keyword>
<keyword id="KW-1185">Reference proteome</keyword>
<keyword id="KW-0964">Secreted</keyword>
<keyword id="KW-0812">Transmembrane</keyword>
<keyword id="KW-1133">Transmembrane helix</keyword>
<keyword id="KW-0813">Transport</keyword>
<organism>
    <name type="scientific">Bos taurus</name>
    <name type="common">Bovine</name>
    <dbReference type="NCBI Taxonomy" id="9913"/>
    <lineage>
        <taxon>Eukaryota</taxon>
        <taxon>Metazoa</taxon>
        <taxon>Chordata</taxon>
        <taxon>Craniata</taxon>
        <taxon>Vertebrata</taxon>
        <taxon>Euteleostomi</taxon>
        <taxon>Mammalia</taxon>
        <taxon>Eutheria</taxon>
        <taxon>Laurasiatheria</taxon>
        <taxon>Artiodactyla</taxon>
        <taxon>Ruminantia</taxon>
        <taxon>Pecora</taxon>
        <taxon>Bovidae</taxon>
        <taxon>Bovinae</taxon>
        <taxon>Bos</taxon>
    </lineage>
</organism>
<evidence type="ECO:0000250" key="1"/>
<evidence type="ECO:0000250" key="2">
    <source>
        <dbReference type="UniProtKB" id="P08962"/>
    </source>
</evidence>
<evidence type="ECO:0000250" key="3">
    <source>
        <dbReference type="UniProtKB" id="P41731"/>
    </source>
</evidence>
<evidence type="ECO:0000255" key="4"/>
<evidence type="ECO:0000305" key="5"/>
<dbReference type="EMBL" id="AJ012589">
    <property type="protein sequence ID" value="CAB40564.1"/>
    <property type="molecule type" value="mRNA"/>
</dbReference>
<dbReference type="EMBL" id="BC102657">
    <property type="protein sequence ID" value="AAI02658.1"/>
    <property type="molecule type" value="mRNA"/>
</dbReference>
<dbReference type="RefSeq" id="NP_991372.1">
    <property type="nucleotide sequence ID" value="NM_205803.1"/>
</dbReference>
<dbReference type="SMR" id="Q9XSK2"/>
<dbReference type="FunCoup" id="Q9XSK2">
    <property type="interactions" value="705"/>
</dbReference>
<dbReference type="STRING" id="9913.ENSBTAP00000072764"/>
<dbReference type="GlyCosmos" id="Q9XSK2">
    <property type="glycosylation" value="4 sites, No reported glycans"/>
</dbReference>
<dbReference type="GlyGen" id="Q9XSK2">
    <property type="glycosylation" value="4 sites"/>
</dbReference>
<dbReference type="PaxDb" id="9913-ENSBTAP00000015829"/>
<dbReference type="Ensembl" id="ENSBTAT00000015829.4">
    <property type="protein sequence ID" value="ENSBTAP00000015829.3"/>
    <property type="gene ID" value="ENSBTAG00000011931.5"/>
</dbReference>
<dbReference type="GeneID" id="404156"/>
<dbReference type="KEGG" id="bta:404156"/>
<dbReference type="CTD" id="967"/>
<dbReference type="VEuPathDB" id="HostDB:ENSBTAG00000011931"/>
<dbReference type="eggNOG" id="KOG3882">
    <property type="taxonomic scope" value="Eukaryota"/>
</dbReference>
<dbReference type="GeneTree" id="ENSGT00940000156832"/>
<dbReference type="HOGENOM" id="CLU_055524_6_1_1"/>
<dbReference type="InParanoid" id="Q9XSK2"/>
<dbReference type="OrthoDB" id="10033535at2759"/>
<dbReference type="TreeFam" id="TF352891"/>
<dbReference type="Reactome" id="R-BTA-114608">
    <property type="pathway name" value="Platelet degranulation"/>
</dbReference>
<dbReference type="Reactome" id="R-BTA-6798695">
    <property type="pathway name" value="Neutrophil degranulation"/>
</dbReference>
<dbReference type="Proteomes" id="UP000009136">
    <property type="component" value="Chromosome 5"/>
</dbReference>
<dbReference type="Bgee" id="ENSBTAG00000011931">
    <property type="expression patterns" value="Expressed in uterine cervix and 107 other cell types or tissues"/>
</dbReference>
<dbReference type="GO" id="GO:0009986">
    <property type="term" value="C:cell surface"/>
    <property type="evidence" value="ECO:0007669"/>
    <property type="project" value="UniProtKB-SubCell"/>
</dbReference>
<dbReference type="GO" id="GO:0005576">
    <property type="term" value="C:extracellular region"/>
    <property type="evidence" value="ECO:0007669"/>
    <property type="project" value="UniProtKB-SubCell"/>
</dbReference>
<dbReference type="GO" id="GO:0031902">
    <property type="term" value="C:late endosome membrane"/>
    <property type="evidence" value="ECO:0000250"/>
    <property type="project" value="UniProtKB"/>
</dbReference>
<dbReference type="GO" id="GO:0005765">
    <property type="term" value="C:lysosomal membrane"/>
    <property type="evidence" value="ECO:0000250"/>
    <property type="project" value="UniProtKB"/>
</dbReference>
<dbReference type="GO" id="GO:0042470">
    <property type="term" value="C:melanosome"/>
    <property type="evidence" value="ECO:0007669"/>
    <property type="project" value="UniProtKB-SubCell"/>
</dbReference>
<dbReference type="GO" id="GO:0032585">
    <property type="term" value="C:multivesicular body membrane"/>
    <property type="evidence" value="ECO:0000250"/>
    <property type="project" value="UniProtKB"/>
</dbReference>
<dbReference type="GO" id="GO:0097487">
    <property type="term" value="C:multivesicular body, internal vesicle"/>
    <property type="evidence" value="ECO:0000250"/>
    <property type="project" value="UniProtKB"/>
</dbReference>
<dbReference type="GO" id="GO:0005886">
    <property type="term" value="C:plasma membrane"/>
    <property type="evidence" value="ECO:0000250"/>
    <property type="project" value="UniProtKB"/>
</dbReference>
<dbReference type="GO" id="GO:0016477">
    <property type="term" value="P:cell migration"/>
    <property type="evidence" value="ECO:0000250"/>
    <property type="project" value="UniProtKB"/>
</dbReference>
<dbReference type="GO" id="GO:0007160">
    <property type="term" value="P:cell-matrix adhesion"/>
    <property type="evidence" value="ECO:0000250"/>
    <property type="project" value="UniProtKB"/>
</dbReference>
<dbReference type="GO" id="GO:0035646">
    <property type="term" value="P:endosome to melanosome transport"/>
    <property type="evidence" value="ECO:0000250"/>
    <property type="project" value="UniProtKB"/>
</dbReference>
<dbReference type="GO" id="GO:0048757">
    <property type="term" value="P:pigment granule maturation"/>
    <property type="evidence" value="ECO:0000250"/>
    <property type="project" value="UniProtKB"/>
</dbReference>
<dbReference type="GO" id="GO:2001046">
    <property type="term" value="P:positive regulation of integrin-mediated signaling pathway"/>
    <property type="evidence" value="ECO:0000250"/>
    <property type="project" value="UniProtKB"/>
</dbReference>
<dbReference type="GO" id="GO:0002092">
    <property type="term" value="P:positive regulation of receptor internalization"/>
    <property type="evidence" value="ECO:0000250"/>
    <property type="project" value="UniProtKB"/>
</dbReference>
<dbReference type="GO" id="GO:0015031">
    <property type="term" value="P:protein transport"/>
    <property type="evidence" value="ECO:0007669"/>
    <property type="project" value="UniProtKB-KW"/>
</dbReference>
<dbReference type="GO" id="GO:1900746">
    <property type="term" value="P:regulation of vascular endothelial growth factor signaling pathway"/>
    <property type="evidence" value="ECO:0000250"/>
    <property type="project" value="UniProtKB"/>
</dbReference>
<dbReference type="CDD" id="cd03166">
    <property type="entry name" value="CD63_LEL"/>
    <property type="match status" value="1"/>
</dbReference>
<dbReference type="FunFam" id="1.10.1450.10:FF:000019">
    <property type="entry name" value="Tetraspanin"/>
    <property type="match status" value="1"/>
</dbReference>
<dbReference type="Gene3D" id="1.10.1450.10">
    <property type="entry name" value="Tetraspanin"/>
    <property type="match status" value="1"/>
</dbReference>
<dbReference type="InterPro" id="IPR042028">
    <property type="entry name" value="CD63_LEL"/>
</dbReference>
<dbReference type="InterPro" id="IPR018499">
    <property type="entry name" value="Tetraspanin/Peripherin"/>
</dbReference>
<dbReference type="InterPro" id="IPR000301">
    <property type="entry name" value="Tetraspanin_animals"/>
</dbReference>
<dbReference type="InterPro" id="IPR018503">
    <property type="entry name" value="Tetraspanin_CS"/>
</dbReference>
<dbReference type="InterPro" id="IPR008952">
    <property type="entry name" value="Tetraspanin_EC2_sf"/>
</dbReference>
<dbReference type="PANTHER" id="PTHR19282:SF471">
    <property type="entry name" value="CD63 ANTIGEN"/>
    <property type="match status" value="1"/>
</dbReference>
<dbReference type="PANTHER" id="PTHR19282">
    <property type="entry name" value="TETRASPANIN"/>
    <property type="match status" value="1"/>
</dbReference>
<dbReference type="Pfam" id="PF00335">
    <property type="entry name" value="Tetraspanin"/>
    <property type="match status" value="1"/>
</dbReference>
<dbReference type="PIRSF" id="PIRSF002419">
    <property type="entry name" value="Tetraspanin"/>
    <property type="match status" value="1"/>
</dbReference>
<dbReference type="PRINTS" id="PR00259">
    <property type="entry name" value="TMFOUR"/>
</dbReference>
<dbReference type="SUPFAM" id="SSF48652">
    <property type="entry name" value="Tetraspanin"/>
    <property type="match status" value="1"/>
</dbReference>
<dbReference type="PROSITE" id="PS00421">
    <property type="entry name" value="TM4_1"/>
    <property type="match status" value="1"/>
</dbReference>
<sequence>MAVEGGMKCVKFLLYVLLLVFCACAVGLIAVGVGTHLVLNQTITHGATPSFLLPVVIIAVGAFLFLVAFVGCCGACKENYCLMITFAIFLSLIMLVEVAAAIAGYVFRDKVRSEFNKDFRQQMKNYPKDNQTASILDKMQKDFECCGAANYTDWEKILAVTNKVPDSCCVNITHNCGINFVVKDIHTEGCVEKIAAWLRKNVLVVAAAALGIAFVEILGIVLACCLVKSIRSGYEVM</sequence>